<accession>Q6MG55</accession>
<gene>
    <name evidence="6" type="primary">Abhd16a</name>
    <name evidence="1" type="synonym">Bat5</name>
</gene>
<protein>
    <recommendedName>
        <fullName evidence="5">Phosphatidylserine lipase ABHD16A</fullName>
        <ecNumber evidence="3">3.1.-.-</ecNumber>
    </recommendedName>
    <alternativeName>
        <fullName evidence="5">Alpha/beta hydrolase domain-containing protein 16A</fullName>
        <shortName evidence="5">Abhydrolase domain-containing protein 16A</shortName>
    </alternativeName>
    <alternativeName>
        <fullName evidence="1">HLA-B-associated transcript 5 homolog</fullName>
    </alternativeName>
    <alternativeName>
        <fullName evidence="5">Monoacylglycerol lipase ABHD16A</fullName>
        <ecNumber evidence="1">3.1.1.23</ecNumber>
    </alternativeName>
</protein>
<keyword id="KW-0378">Hydrolase</keyword>
<keyword id="KW-0443">Lipid metabolism</keyword>
<keyword id="KW-0472">Membrane</keyword>
<keyword id="KW-1185">Reference proteome</keyword>
<keyword id="KW-0812">Transmembrane</keyword>
<keyword id="KW-1133">Transmembrane helix</keyword>
<feature type="chain" id="PRO_0000333744" description="Phosphatidylserine lipase ABHD16A">
    <location>
        <begin position="1"/>
        <end position="558"/>
    </location>
</feature>
<feature type="transmembrane region" description="Helical" evidence="4">
    <location>
        <begin position="60"/>
        <end position="80"/>
    </location>
</feature>
<feature type="transmembrane region" description="Helical" evidence="4">
    <location>
        <begin position="93"/>
        <end position="113"/>
    </location>
</feature>
<feature type="topological domain" description="Cytoplasmic" evidence="3">
    <location>
        <begin position="114"/>
        <end position="558"/>
    </location>
</feature>
<feature type="domain" description="AB hydrolase-1" evidence="4">
    <location>
        <begin position="281"/>
        <end position="407"/>
    </location>
</feature>
<feature type="active site" description="Charge relay system" evidence="2">
    <location>
        <position position="355"/>
    </location>
</feature>
<feature type="active site" description="Charge relay system" evidence="2">
    <location>
        <position position="430"/>
    </location>
</feature>
<feature type="active site" description="Charge relay system" evidence="2">
    <location>
        <position position="507"/>
    </location>
</feature>
<sequence>MAKLLSCVLGPRLYKIYRERDTDRAATSVPETPTAVPAASSSSWDSYYQPRALEKHADSILALASVFWSISYYSSPFAFFYLYRKGYLSLSKVVPFSHYAGTLLVLLAGVACLRGIGRWTNPQYRQFITILEATHRNQSAENKRQLANYNFDFRSWPVDFHWEEPSSRKGSRGGPSRRGVALLRPEPLHRGTADTFLNRVKKLPCQITSYLVAHTLGRRMLYPGSVYLLQKALMPVLLQGQARLVEECNGRRAKLLACDGNEIDTMFVDRRGTAEPQGQKLVICCEGNAGFYEVGCVSTPLEAGYSVLGWNHPGFAGSTGVPFPQNEANAMDVVVQFAIHRLGFQPQDIVIYAWSIGGFTATWAAMSYPDISAVILDASFDDLVPLALKVMPDSWRALVTRTVRQHLNLNNAEQLCRFQGPVLLVRRTKDEIITTTVPEDIMSNRGNDLLLKLLQFRYPRVMTEEGLRAVRQWLEASSQLEEASIYSRWEVDEDWCVSVLRSYQAEHGPDFPWSVGEDMSVDGRRQLALFLARKHLHNFEATHCTPLPAQHFQMPWCL</sequence>
<reference key="1">
    <citation type="journal article" date="2004" name="Genome Res.">
        <title>The genomic sequence and comparative analysis of the rat major histocompatibility complex.</title>
        <authorList>
            <person name="Hurt P."/>
            <person name="Walter L."/>
            <person name="Sudbrak R."/>
            <person name="Klages S."/>
            <person name="Mueller I."/>
            <person name="Shiina T."/>
            <person name="Inoko H."/>
            <person name="Lehrach H."/>
            <person name="Guenther E."/>
            <person name="Reinhardt R."/>
            <person name="Himmelbauer H."/>
        </authorList>
    </citation>
    <scope>NUCLEOTIDE SEQUENCE [LARGE SCALE GENOMIC DNA]</scope>
    <source>
        <strain>Brown Norway</strain>
    </source>
</reference>
<reference key="2">
    <citation type="journal article" date="2004" name="Genome Res.">
        <title>The status, quality, and expansion of the NIH full-length cDNA project: the Mammalian Gene Collection (MGC).</title>
        <authorList>
            <consortium name="The MGC Project Team"/>
        </authorList>
    </citation>
    <scope>NUCLEOTIDE SEQUENCE [LARGE SCALE MRNA]</scope>
    <source>
        <tissue>Brain</tissue>
    </source>
</reference>
<comment type="function">
    <text evidence="1 3">Phosphatidylserine (PS) lipase that mediates the hydrolysis of phosphatidylserine to generate lysophosphatidylserine (LPS). LPS constitutes a class of signaling lipids that regulates immunological and neurological processes (By similarity). Has no activity towards diacylglycerol, triacylglycerol or lysophosphatidylserine lipase (By similarity). Also has monoacylglycerol lipase activity, with preference for 1-(9Z,12Z-octadecadienoyl)-glycerol (1-LG) and 2-glyceryl-15-deoxy-Delta(12,14)-prostaglandin J2 (15d-PGJ(2)-G) (By similarity).</text>
</comment>
<comment type="catalytic activity">
    <reaction evidence="3">
        <text>1-heptadecanoyl-2-(5Z,8Z,11Z,14Z-eicosatetraenoyl)-sn-glycero-3-phosphoserine + H2O = 1-heptadecanoyl-sn-glycero-3-phosphoserine + (5Z,8Z,11Z,14Z)-eicosatetraenoate + H(+)</text>
        <dbReference type="Rhea" id="RHEA:44500"/>
        <dbReference type="ChEBI" id="CHEBI:15377"/>
        <dbReference type="ChEBI" id="CHEBI:15378"/>
        <dbReference type="ChEBI" id="CHEBI:32395"/>
        <dbReference type="ChEBI" id="CHEBI:84461"/>
        <dbReference type="ChEBI" id="CHEBI:84462"/>
    </reaction>
</comment>
<comment type="catalytic activity">
    <reaction evidence="3">
        <text>1-hexadecanoyl-2-(9Z-octadecenoyl)-sn-glycero-3-phospho-L-serine + H2O = 1-hexadecanoyl-sn-glycero-3-phospho-L-serine + (9Z)-octadecenoate + H(+)</text>
        <dbReference type="Rhea" id="RHEA:41752"/>
        <dbReference type="ChEBI" id="CHEBI:15377"/>
        <dbReference type="ChEBI" id="CHEBI:15378"/>
        <dbReference type="ChEBI" id="CHEBI:30823"/>
        <dbReference type="ChEBI" id="CHEBI:75020"/>
        <dbReference type="ChEBI" id="CHEBI:75029"/>
    </reaction>
</comment>
<comment type="catalytic activity">
    <reaction evidence="3">
        <text>1-octadecanoyl-2-(9Z,12Z-octadecadienoyl)-sn-glycero-3-phosphoserine + H2O = 1-octadecanoyl-sn-glycero-3-phosphoserine + (9Z,12Z)-octadecadienoate + H(+)</text>
        <dbReference type="Rhea" id="RHEA:44516"/>
        <dbReference type="ChEBI" id="CHEBI:15377"/>
        <dbReference type="ChEBI" id="CHEBI:15378"/>
        <dbReference type="ChEBI" id="CHEBI:30245"/>
        <dbReference type="ChEBI" id="CHEBI:84466"/>
        <dbReference type="ChEBI" id="CHEBI:84467"/>
    </reaction>
</comment>
<comment type="catalytic activity">
    <reaction evidence="3">
        <text>1-heptadecanoyl-2-(5Z,8Z,11Z,14Z-eicosatetraenoyl)-sn-glycero-3-phosphocholine + H2O = 1-heptadecanoyl-sn-glycero-3-phosphocholine + (5Z,8Z,11Z,14Z)-eicosatetraenoate + H(+)</text>
        <dbReference type="Rhea" id="RHEA:44520"/>
        <dbReference type="ChEBI" id="CHEBI:15377"/>
        <dbReference type="ChEBI" id="CHEBI:15378"/>
        <dbReference type="ChEBI" id="CHEBI:32395"/>
        <dbReference type="ChEBI" id="CHEBI:74340"/>
        <dbReference type="ChEBI" id="CHEBI:84470"/>
    </reaction>
</comment>
<comment type="catalytic activity">
    <reaction evidence="3">
        <text>1-hexadecanoyl-2-(9Z-octadecenoyl)-sn-glycero-3-phosphoglycerol + H2O = 1-hexadecanoyl-sn-glycero-3-phosphoglycerol + (9Z)-octadecenoate + H(+)</text>
        <dbReference type="Rhea" id="RHEA:44524"/>
        <dbReference type="ChEBI" id="CHEBI:15377"/>
        <dbReference type="ChEBI" id="CHEBI:15378"/>
        <dbReference type="ChEBI" id="CHEBI:30823"/>
        <dbReference type="ChEBI" id="CHEBI:84472"/>
        <dbReference type="ChEBI" id="CHEBI:84475"/>
    </reaction>
</comment>
<comment type="catalytic activity">
    <reaction evidence="3">
        <text>1-hexadecanoyl-2-(9Z-octadecenoyl)-sn-glycero-3-phospho-(1D-myo-inositol) + H2O = 1-hexadecanoyl-sn-glycero-3-phospho-(1D-myo-inositol) + (9Z)-octadecenoate + H(+)</text>
        <dbReference type="Rhea" id="RHEA:44528"/>
        <dbReference type="ChEBI" id="CHEBI:15377"/>
        <dbReference type="ChEBI" id="CHEBI:15378"/>
        <dbReference type="ChEBI" id="CHEBI:30823"/>
        <dbReference type="ChEBI" id="CHEBI:72833"/>
        <dbReference type="ChEBI" id="CHEBI:72837"/>
    </reaction>
</comment>
<comment type="catalytic activity">
    <reaction evidence="3">
        <text>1-heptadecanoyl-2-(5Z,8Z,11Z,14Z-eicosatetraenoyl)-sn-glycero-3-phosphoethanolamine + H2O = 1-heptadecanoyl-sn-glycero-3-phosphoethanolamine + (5Z,8Z,11Z,14Z)-eicosatetraenoate + H(+)</text>
        <dbReference type="Rhea" id="RHEA:44540"/>
        <dbReference type="ChEBI" id="CHEBI:15377"/>
        <dbReference type="ChEBI" id="CHEBI:15378"/>
        <dbReference type="ChEBI" id="CHEBI:32395"/>
        <dbReference type="ChEBI" id="CHEBI:84489"/>
        <dbReference type="ChEBI" id="CHEBI:84490"/>
    </reaction>
</comment>
<comment type="catalytic activity">
    <reaction evidence="3">
        <text>1-hexadecanoyl-2-(9Z-octadecenoyl)-sn-glycero-3-phospho-(1'-sn-glycerol) + H2O = 1-hexadecanoyl-sn-glycero-3-phospho-(1'-sn-glycerol) + (9Z)-octadecenoate + H(+)</text>
        <dbReference type="Rhea" id="RHEA:40919"/>
        <dbReference type="ChEBI" id="CHEBI:15377"/>
        <dbReference type="ChEBI" id="CHEBI:15378"/>
        <dbReference type="ChEBI" id="CHEBI:30823"/>
        <dbReference type="ChEBI" id="CHEBI:72841"/>
        <dbReference type="ChEBI" id="CHEBI:75158"/>
    </reaction>
</comment>
<comment type="catalytic activity">
    <reaction evidence="1">
        <text>Hydrolyzes glycerol monoesters of long-chain fatty acids.</text>
        <dbReference type="EC" id="3.1.1.23"/>
    </reaction>
</comment>
<comment type="catalytic activity">
    <reaction evidence="1">
        <text>1-tetradecanoylglycerol + H2O = tetradecanoate + glycerol + H(+)</text>
        <dbReference type="Rhea" id="RHEA:44312"/>
        <dbReference type="ChEBI" id="CHEBI:15377"/>
        <dbReference type="ChEBI" id="CHEBI:15378"/>
        <dbReference type="ChEBI" id="CHEBI:17754"/>
        <dbReference type="ChEBI" id="CHEBI:30807"/>
        <dbReference type="ChEBI" id="CHEBI:75562"/>
    </reaction>
</comment>
<comment type="catalytic activity">
    <reaction evidence="1">
        <text>2-hexadecanoylglycerol + H2O = glycerol + hexadecanoate + H(+)</text>
        <dbReference type="Rhea" id="RHEA:39963"/>
        <dbReference type="ChEBI" id="CHEBI:7896"/>
        <dbReference type="ChEBI" id="CHEBI:15377"/>
        <dbReference type="ChEBI" id="CHEBI:15378"/>
        <dbReference type="ChEBI" id="CHEBI:17754"/>
        <dbReference type="ChEBI" id="CHEBI:75455"/>
    </reaction>
</comment>
<comment type="catalytic activity">
    <reaction evidence="1">
        <text>1-(9Z-octadecenoyl)-glycerol + H2O = glycerol + (9Z)-octadecenoate + H(+)</text>
        <dbReference type="Rhea" id="RHEA:38487"/>
        <dbReference type="ChEBI" id="CHEBI:15377"/>
        <dbReference type="ChEBI" id="CHEBI:15378"/>
        <dbReference type="ChEBI" id="CHEBI:17754"/>
        <dbReference type="ChEBI" id="CHEBI:30823"/>
        <dbReference type="ChEBI" id="CHEBI:75342"/>
    </reaction>
</comment>
<comment type="catalytic activity">
    <reaction evidence="1">
        <text>2-(9Z-octadecenoyl)-glycerol + H2O = glycerol + (9Z)-octadecenoate + H(+)</text>
        <dbReference type="Rhea" id="RHEA:38491"/>
        <dbReference type="ChEBI" id="CHEBI:15377"/>
        <dbReference type="ChEBI" id="CHEBI:15378"/>
        <dbReference type="ChEBI" id="CHEBI:17754"/>
        <dbReference type="ChEBI" id="CHEBI:30823"/>
        <dbReference type="ChEBI" id="CHEBI:73990"/>
    </reaction>
</comment>
<comment type="catalytic activity">
    <reaction evidence="1">
        <text>2-(9Z,12Z-octadecadienoyl)-glycerol + H2O = (9Z,12Z)-octadecadienoate + glycerol + H(+)</text>
        <dbReference type="Rhea" id="RHEA:44732"/>
        <dbReference type="ChEBI" id="CHEBI:15377"/>
        <dbReference type="ChEBI" id="CHEBI:15378"/>
        <dbReference type="ChEBI" id="CHEBI:17754"/>
        <dbReference type="ChEBI" id="CHEBI:30245"/>
        <dbReference type="ChEBI" id="CHEBI:75457"/>
    </reaction>
</comment>
<comment type="catalytic activity">
    <reaction evidence="1">
        <text>1-(5Z,8Z,11Z,14Z-eicosatetraenoyl)-glycerol + H2O = glycerol + (5Z,8Z,11Z,14Z)-eicosatetraenoate + H(+)</text>
        <dbReference type="Rhea" id="RHEA:44728"/>
        <dbReference type="ChEBI" id="CHEBI:15377"/>
        <dbReference type="ChEBI" id="CHEBI:15378"/>
        <dbReference type="ChEBI" id="CHEBI:17754"/>
        <dbReference type="ChEBI" id="CHEBI:32395"/>
        <dbReference type="ChEBI" id="CHEBI:75612"/>
    </reaction>
</comment>
<comment type="catalytic activity">
    <reaction evidence="1">
        <text>2-(5Z,8Z,11Z,14Z-eicosatetraenoyl)-glycerol + H2O = glycerol + (5Z,8Z,11Z,14Z)-eicosatetraenoate + H(+)</text>
        <dbReference type="Rhea" id="RHEA:26132"/>
        <dbReference type="ChEBI" id="CHEBI:15377"/>
        <dbReference type="ChEBI" id="CHEBI:15378"/>
        <dbReference type="ChEBI" id="CHEBI:17754"/>
        <dbReference type="ChEBI" id="CHEBI:32395"/>
        <dbReference type="ChEBI" id="CHEBI:52392"/>
    </reaction>
</comment>
<comment type="catalytic activity">
    <reaction evidence="1">
        <text>prostaglandin D2-1-glycerol ester + H2O = prostaglandin D2 + glycerol + H(+)</text>
        <dbReference type="Rhea" id="RHEA:45412"/>
        <dbReference type="ChEBI" id="CHEBI:15377"/>
        <dbReference type="ChEBI" id="CHEBI:15378"/>
        <dbReference type="ChEBI" id="CHEBI:17754"/>
        <dbReference type="ChEBI" id="CHEBI:57406"/>
        <dbReference type="ChEBI" id="CHEBI:85232"/>
    </reaction>
</comment>
<comment type="catalytic activity">
    <reaction evidence="3">
        <text>2-glyceryl-15-deoxy-Delta(12,14)-prostaglandin J2 + H2O = 15-deoxy-Delta(12,14)-prostaglandin J2 + glycerol + H(+)</text>
        <dbReference type="Rhea" id="RHEA:45416"/>
        <dbReference type="ChEBI" id="CHEBI:15377"/>
        <dbReference type="ChEBI" id="CHEBI:15378"/>
        <dbReference type="ChEBI" id="CHEBI:17754"/>
        <dbReference type="ChEBI" id="CHEBI:85236"/>
        <dbReference type="ChEBI" id="CHEBI:85238"/>
    </reaction>
</comment>
<comment type="catalytic activity">
    <reaction evidence="3">
        <text>1-(9Z,12Z-octadecadienoyl)-glycerol + H2O = (9Z,12Z)-octadecadienoate + glycerol + H(+)</text>
        <dbReference type="Rhea" id="RHEA:48428"/>
        <dbReference type="ChEBI" id="CHEBI:15377"/>
        <dbReference type="ChEBI" id="CHEBI:15378"/>
        <dbReference type="ChEBI" id="CHEBI:17754"/>
        <dbReference type="ChEBI" id="CHEBI:30245"/>
        <dbReference type="ChEBI" id="CHEBI:75568"/>
    </reaction>
</comment>
<comment type="subcellular location">
    <subcellularLocation>
        <location evidence="3">Membrane</location>
        <topology evidence="4">Multi-pass membrane protein</topology>
    </subcellularLocation>
</comment>
<comment type="similarity">
    <text evidence="5">Belongs to the AB hydrolase superfamily. ABHD16 family.</text>
</comment>
<organism>
    <name type="scientific">Rattus norvegicus</name>
    <name type="common">Rat</name>
    <dbReference type="NCBI Taxonomy" id="10116"/>
    <lineage>
        <taxon>Eukaryota</taxon>
        <taxon>Metazoa</taxon>
        <taxon>Chordata</taxon>
        <taxon>Craniata</taxon>
        <taxon>Vertebrata</taxon>
        <taxon>Euteleostomi</taxon>
        <taxon>Mammalia</taxon>
        <taxon>Eutheria</taxon>
        <taxon>Euarchontoglires</taxon>
        <taxon>Glires</taxon>
        <taxon>Rodentia</taxon>
        <taxon>Myomorpha</taxon>
        <taxon>Muroidea</taxon>
        <taxon>Muridae</taxon>
        <taxon>Murinae</taxon>
        <taxon>Rattus</taxon>
    </lineage>
</organism>
<dbReference type="EC" id="3.1.-.-" evidence="3"/>
<dbReference type="EC" id="3.1.1.23" evidence="1"/>
<dbReference type="EMBL" id="BX883045">
    <property type="protein sequence ID" value="CAE83991.1"/>
    <property type="molecule type" value="Genomic_DNA"/>
</dbReference>
<dbReference type="EMBL" id="BC091227">
    <property type="protein sequence ID" value="AAH91227.1"/>
    <property type="molecule type" value="mRNA"/>
</dbReference>
<dbReference type="RefSeq" id="NP_997696.1">
    <property type="nucleotide sequence ID" value="NM_212531.2"/>
</dbReference>
<dbReference type="SMR" id="Q6MG55"/>
<dbReference type="FunCoup" id="Q6MG55">
    <property type="interactions" value="2250"/>
</dbReference>
<dbReference type="STRING" id="10116.ENSRNOP00000071617"/>
<dbReference type="ChEMBL" id="CHEMBL4523343"/>
<dbReference type="ESTHER" id="ratno-q6mg55">
    <property type="family name" value="ABHD16"/>
</dbReference>
<dbReference type="iPTMnet" id="Q6MG55"/>
<dbReference type="PhosphoSitePlus" id="Q6MG55"/>
<dbReference type="SwissPalm" id="Q6MG55"/>
<dbReference type="jPOST" id="Q6MG55"/>
<dbReference type="PaxDb" id="10116-ENSRNOP00000001121"/>
<dbReference type="GeneID" id="361796"/>
<dbReference type="KEGG" id="rno:361796"/>
<dbReference type="UCSC" id="RGD:1303164">
    <property type="organism name" value="rat"/>
</dbReference>
<dbReference type="AGR" id="RGD:1303164"/>
<dbReference type="CTD" id="7920"/>
<dbReference type="RGD" id="1303164">
    <property type="gene designation" value="Abhd16a"/>
</dbReference>
<dbReference type="eggNOG" id="KOG1553">
    <property type="taxonomic scope" value="Eukaryota"/>
</dbReference>
<dbReference type="InParanoid" id="Q6MG55"/>
<dbReference type="OrthoDB" id="19753at9989"/>
<dbReference type="PhylomeDB" id="Q6MG55"/>
<dbReference type="TreeFam" id="TF314267"/>
<dbReference type="PRO" id="PR:Q6MG55"/>
<dbReference type="Proteomes" id="UP000002494">
    <property type="component" value="Unplaced"/>
</dbReference>
<dbReference type="GO" id="GO:0016020">
    <property type="term" value="C:membrane"/>
    <property type="evidence" value="ECO:0007669"/>
    <property type="project" value="UniProtKB-SubCell"/>
</dbReference>
<dbReference type="GO" id="GO:0047372">
    <property type="term" value="F:monoacylglycerol lipase activity"/>
    <property type="evidence" value="ECO:0000250"/>
    <property type="project" value="UniProtKB"/>
</dbReference>
<dbReference type="GO" id="GO:0004620">
    <property type="term" value="F:phospholipase activity"/>
    <property type="evidence" value="ECO:0000250"/>
    <property type="project" value="UniProtKB"/>
</dbReference>
<dbReference type="GO" id="GO:0052651">
    <property type="term" value="P:monoacylglycerol catabolic process"/>
    <property type="evidence" value="ECO:0000250"/>
    <property type="project" value="UniProtKB"/>
</dbReference>
<dbReference type="GO" id="GO:0006660">
    <property type="term" value="P:phosphatidylserine catabolic process"/>
    <property type="evidence" value="ECO:0000250"/>
    <property type="project" value="UniProtKB"/>
</dbReference>
<dbReference type="GO" id="GO:1905344">
    <property type="term" value="P:prostaglandin catabolic process"/>
    <property type="evidence" value="ECO:0000266"/>
    <property type="project" value="RGD"/>
</dbReference>
<dbReference type="FunFam" id="3.40.50.1820:FF:000074">
    <property type="entry name" value="Abhydrolase domain containing 16A"/>
    <property type="match status" value="1"/>
</dbReference>
<dbReference type="Gene3D" id="3.40.50.1820">
    <property type="entry name" value="alpha/beta hydrolase"/>
    <property type="match status" value="1"/>
</dbReference>
<dbReference type="InterPro" id="IPR000073">
    <property type="entry name" value="AB_hydrolase_1"/>
</dbReference>
<dbReference type="InterPro" id="IPR029058">
    <property type="entry name" value="AB_hydrolase_fold"/>
</dbReference>
<dbReference type="InterPro" id="IPR054518">
    <property type="entry name" value="ABHD16_N"/>
</dbReference>
<dbReference type="PANTHER" id="PTHR12277">
    <property type="entry name" value="ALPHA/BETA HYDROLASE DOMAIN-CONTAINING PROTEIN"/>
    <property type="match status" value="1"/>
</dbReference>
<dbReference type="PANTHER" id="PTHR12277:SF54">
    <property type="entry name" value="PHOSPHATIDYLSERINE LIPASE ABHD16A"/>
    <property type="match status" value="1"/>
</dbReference>
<dbReference type="Pfam" id="PF22990">
    <property type="entry name" value="ABHD16_N"/>
    <property type="match status" value="1"/>
</dbReference>
<dbReference type="Pfam" id="PF00561">
    <property type="entry name" value="Abhydrolase_1"/>
    <property type="match status" value="1"/>
</dbReference>
<dbReference type="SUPFAM" id="SSF53474">
    <property type="entry name" value="alpha/beta-Hydrolases"/>
    <property type="match status" value="1"/>
</dbReference>
<name>ABHGA_RAT</name>
<proteinExistence type="evidence at transcript level"/>
<evidence type="ECO:0000250" key="1">
    <source>
        <dbReference type="UniProtKB" id="O95870"/>
    </source>
</evidence>
<evidence type="ECO:0000250" key="2">
    <source>
        <dbReference type="UniProtKB" id="Q8N2K0"/>
    </source>
</evidence>
<evidence type="ECO:0000250" key="3">
    <source>
        <dbReference type="UniProtKB" id="Q9Z1Q2"/>
    </source>
</evidence>
<evidence type="ECO:0000255" key="4"/>
<evidence type="ECO:0000305" key="5"/>
<evidence type="ECO:0000312" key="6">
    <source>
        <dbReference type="RGD" id="1303164"/>
    </source>
</evidence>